<feature type="chain" id="PRO_0000318725" description="Cysteine/O-acetylserine efflux protein">
    <location>
        <begin position="1"/>
        <end position="195"/>
    </location>
</feature>
<feature type="topological domain" description="Periplasmic" evidence="2">
    <location>
        <begin position="1"/>
        <end position="7"/>
    </location>
</feature>
<feature type="transmembrane region" description="Helical" evidence="2">
    <location>
        <begin position="8"/>
        <end position="28"/>
    </location>
</feature>
<feature type="topological domain" description="Cytoplasmic" evidence="2">
    <location>
        <begin position="29"/>
        <end position="46"/>
    </location>
</feature>
<feature type="transmembrane region" description="Helical" evidence="2">
    <location>
        <begin position="47"/>
        <end position="67"/>
    </location>
</feature>
<feature type="topological domain" description="Periplasmic" evidence="2">
    <location>
        <begin position="68"/>
        <end position="69"/>
    </location>
</feature>
<feature type="transmembrane region" description="Helical" evidence="2">
    <location>
        <begin position="70"/>
        <end position="90"/>
    </location>
</feature>
<feature type="topological domain" description="Cytoplasmic" evidence="2">
    <location>
        <begin position="91"/>
        <end position="104"/>
    </location>
</feature>
<feature type="transmembrane region" description="Helical" evidence="2">
    <location>
        <begin position="105"/>
        <end position="125"/>
    </location>
</feature>
<feature type="topological domain" description="Periplasmic" evidence="2">
    <location>
        <begin position="126"/>
        <end position="141"/>
    </location>
</feature>
<feature type="transmembrane region" description="Helical" evidence="2">
    <location>
        <begin position="142"/>
        <end position="162"/>
    </location>
</feature>
<feature type="topological domain" description="Cytoplasmic" evidence="2">
    <location>
        <begin position="163"/>
        <end position="176"/>
    </location>
</feature>
<feature type="transmembrane region" description="Helical" evidence="2">
    <location>
        <begin position="177"/>
        <end position="194"/>
    </location>
</feature>
<feature type="topological domain" description="Periplasmic" evidence="1">
    <location>
        <position position="195"/>
    </location>
</feature>
<name>EAMB_ECOL5</name>
<proteinExistence type="inferred from homology"/>
<accession>Q0TER0</accession>
<comment type="function">
    <text evidence="1">Exporter of O-acetylserine (OAS) and cysteine.</text>
</comment>
<comment type="catalytic activity">
    <reaction evidence="1">
        <text>O-acetyl-L-serine(in) = O-acetyl-L-serine(out)</text>
        <dbReference type="Rhea" id="RHEA:29659"/>
        <dbReference type="ChEBI" id="CHEBI:58340"/>
    </reaction>
    <physiologicalReaction direction="left-to-right" evidence="1">
        <dbReference type="Rhea" id="RHEA:29660"/>
    </physiologicalReaction>
</comment>
<comment type="catalytic activity">
    <reaction evidence="1">
        <text>L-cysteine(in) = L-cysteine(out)</text>
        <dbReference type="Rhea" id="RHEA:29655"/>
        <dbReference type="ChEBI" id="CHEBI:35235"/>
    </reaction>
    <physiologicalReaction direction="left-to-right" evidence="1">
        <dbReference type="Rhea" id="RHEA:29656"/>
    </physiologicalReaction>
</comment>
<comment type="subcellular location">
    <subcellularLocation>
        <location evidence="1">Cell inner membrane</location>
        <topology evidence="2">Multi-pass membrane protein</topology>
    </subcellularLocation>
</comment>
<comment type="similarity">
    <text evidence="3">Belongs to the Rht family.</text>
</comment>
<evidence type="ECO:0000250" key="1">
    <source>
        <dbReference type="UniProtKB" id="P38101"/>
    </source>
</evidence>
<evidence type="ECO:0000255" key="2"/>
<evidence type="ECO:0000305" key="3"/>
<dbReference type="EMBL" id="CP000247">
    <property type="protein sequence ID" value="ABG70569.1"/>
    <property type="molecule type" value="Genomic_DNA"/>
</dbReference>
<dbReference type="RefSeq" id="WP_000189209.1">
    <property type="nucleotide sequence ID" value="NC_008253.1"/>
</dbReference>
<dbReference type="KEGG" id="ecp:ECP_2580"/>
<dbReference type="HOGENOM" id="CLU_079569_1_2_6"/>
<dbReference type="Proteomes" id="UP000009182">
    <property type="component" value="Chromosome"/>
</dbReference>
<dbReference type="GO" id="GO:0005886">
    <property type="term" value="C:plasma membrane"/>
    <property type="evidence" value="ECO:0007669"/>
    <property type="project" value="UniProtKB-SubCell"/>
</dbReference>
<dbReference type="GO" id="GO:0015171">
    <property type="term" value="F:amino acid transmembrane transporter activity"/>
    <property type="evidence" value="ECO:0007669"/>
    <property type="project" value="TreeGrafter"/>
</dbReference>
<dbReference type="GO" id="GO:0033228">
    <property type="term" value="P:cysteine export across plasma membrane"/>
    <property type="evidence" value="ECO:0007669"/>
    <property type="project" value="TreeGrafter"/>
</dbReference>
<dbReference type="InterPro" id="IPR001123">
    <property type="entry name" value="LeuE-type"/>
</dbReference>
<dbReference type="NCBIfam" id="NF007653">
    <property type="entry name" value="PRK10323.1"/>
    <property type="match status" value="1"/>
</dbReference>
<dbReference type="PANTHER" id="PTHR30086">
    <property type="entry name" value="ARGININE EXPORTER PROTEIN ARGO"/>
    <property type="match status" value="1"/>
</dbReference>
<dbReference type="PANTHER" id="PTHR30086:SF20">
    <property type="entry name" value="ARGININE EXPORTER PROTEIN ARGO-RELATED"/>
    <property type="match status" value="1"/>
</dbReference>
<dbReference type="Pfam" id="PF01810">
    <property type="entry name" value="LysE"/>
    <property type="match status" value="1"/>
</dbReference>
<organism>
    <name type="scientific">Escherichia coli O6:K15:H31 (strain 536 / UPEC)</name>
    <dbReference type="NCBI Taxonomy" id="362663"/>
    <lineage>
        <taxon>Bacteria</taxon>
        <taxon>Pseudomonadati</taxon>
        <taxon>Pseudomonadota</taxon>
        <taxon>Gammaproteobacteria</taxon>
        <taxon>Enterobacterales</taxon>
        <taxon>Enterobacteriaceae</taxon>
        <taxon>Escherichia</taxon>
    </lineage>
</organism>
<reference key="1">
    <citation type="journal article" date="2006" name="Mol. Microbiol.">
        <title>Role of pathogenicity island-associated integrases in the genome plasticity of uropathogenic Escherichia coli strain 536.</title>
        <authorList>
            <person name="Hochhut B."/>
            <person name="Wilde C."/>
            <person name="Balling G."/>
            <person name="Middendorf B."/>
            <person name="Dobrindt U."/>
            <person name="Brzuszkiewicz E."/>
            <person name="Gottschalk G."/>
            <person name="Carniel E."/>
            <person name="Hacker J."/>
        </authorList>
    </citation>
    <scope>NUCLEOTIDE SEQUENCE [LARGE SCALE GENOMIC DNA]</scope>
    <source>
        <strain>536 / UPEC</strain>
    </source>
</reference>
<sequence length="195" mass="21278">MTPTLLSAFWTYTLITAMTPGPNNILALSSATSHGFRQSTRVLAGMSLGFLIVMLLCAGISFSLAVIDPAAVHLLSWAGAAYIVWLAWKIATSPTKEDGLQTKPISFWASFALQFVNVKIILYGVTALSTFVLPQTQALSWVVGVSVLLAMIGTFGNVCWALAGHLFQRLFRQYGRQLNIVLALLLVYCAVRIFY</sequence>
<keyword id="KW-0029">Amino-acid transport</keyword>
<keyword id="KW-0997">Cell inner membrane</keyword>
<keyword id="KW-1003">Cell membrane</keyword>
<keyword id="KW-0472">Membrane</keyword>
<keyword id="KW-0812">Transmembrane</keyword>
<keyword id="KW-1133">Transmembrane helix</keyword>
<keyword id="KW-0813">Transport</keyword>
<gene>
    <name type="primary">eamB</name>
    <name type="ordered locus">ECP_2580</name>
</gene>
<protein>
    <recommendedName>
        <fullName evidence="1">Cysteine/O-acetylserine efflux protein</fullName>
    </recommendedName>
</protein>